<dbReference type="EC" id="2.4.1.1"/>
<dbReference type="EMBL" id="CR860831">
    <property type="protein sequence ID" value="CAH92940.1"/>
    <property type="molecule type" value="mRNA"/>
</dbReference>
<dbReference type="RefSeq" id="NP_001126731.1">
    <property type="nucleotide sequence ID" value="NM_001133259.1"/>
</dbReference>
<dbReference type="SMR" id="Q5R5M6"/>
<dbReference type="FunCoup" id="Q5R5M6">
    <property type="interactions" value="1215"/>
</dbReference>
<dbReference type="STRING" id="9601.ENSPPYP00000012049"/>
<dbReference type="CAZy" id="GT35">
    <property type="family name" value="Glycosyltransferase Family 35"/>
</dbReference>
<dbReference type="GeneID" id="100173733"/>
<dbReference type="KEGG" id="pon:100173733"/>
<dbReference type="CTD" id="5834"/>
<dbReference type="eggNOG" id="KOG2099">
    <property type="taxonomic scope" value="Eukaryota"/>
</dbReference>
<dbReference type="InParanoid" id="Q5R5M6"/>
<dbReference type="OrthoDB" id="9215500at2759"/>
<dbReference type="Proteomes" id="UP000001595">
    <property type="component" value="Unplaced"/>
</dbReference>
<dbReference type="GO" id="GO:0005737">
    <property type="term" value="C:cytoplasm"/>
    <property type="evidence" value="ECO:0007669"/>
    <property type="project" value="TreeGrafter"/>
</dbReference>
<dbReference type="GO" id="GO:0008184">
    <property type="term" value="F:glycogen phosphorylase activity"/>
    <property type="evidence" value="ECO:0007669"/>
    <property type="project" value="InterPro"/>
</dbReference>
<dbReference type="GO" id="GO:0030170">
    <property type="term" value="F:pyridoxal phosphate binding"/>
    <property type="evidence" value="ECO:0007669"/>
    <property type="project" value="InterPro"/>
</dbReference>
<dbReference type="GO" id="GO:0005980">
    <property type="term" value="P:glycogen catabolic process"/>
    <property type="evidence" value="ECO:0007669"/>
    <property type="project" value="TreeGrafter"/>
</dbReference>
<dbReference type="CDD" id="cd04300">
    <property type="entry name" value="GT35_Glycogen_Phosphorylase"/>
    <property type="match status" value="1"/>
</dbReference>
<dbReference type="FunFam" id="3.40.50.2000:FF:000005">
    <property type="entry name" value="Alpha-1,4 glucan phosphorylase"/>
    <property type="match status" value="1"/>
</dbReference>
<dbReference type="FunFam" id="3.40.50.2000:FF:000153">
    <property type="entry name" value="Alpha-1,4 glucan phosphorylase"/>
    <property type="match status" value="1"/>
</dbReference>
<dbReference type="FunFam" id="3.40.50.2000:FF:000197">
    <property type="entry name" value="Alpha-1,4 glucan phosphorylase"/>
    <property type="match status" value="1"/>
</dbReference>
<dbReference type="Gene3D" id="3.40.50.2000">
    <property type="entry name" value="Glycogen Phosphorylase B"/>
    <property type="match status" value="2"/>
</dbReference>
<dbReference type="InterPro" id="IPR011833">
    <property type="entry name" value="Glycg_phsphrylas"/>
</dbReference>
<dbReference type="InterPro" id="IPR000811">
    <property type="entry name" value="Glyco_trans_35"/>
</dbReference>
<dbReference type="InterPro" id="IPR035090">
    <property type="entry name" value="Pyridoxal_P_attach_site"/>
</dbReference>
<dbReference type="NCBIfam" id="TIGR02093">
    <property type="entry name" value="P_ylase"/>
    <property type="match status" value="1"/>
</dbReference>
<dbReference type="PANTHER" id="PTHR11468">
    <property type="entry name" value="GLYCOGEN PHOSPHORYLASE"/>
    <property type="match status" value="1"/>
</dbReference>
<dbReference type="PANTHER" id="PTHR11468:SF29">
    <property type="entry name" value="GLYCOGEN PHOSPHORYLASE, BRAIN FORM"/>
    <property type="match status" value="1"/>
</dbReference>
<dbReference type="Pfam" id="PF00343">
    <property type="entry name" value="Phosphorylase"/>
    <property type="match status" value="1"/>
</dbReference>
<dbReference type="PIRSF" id="PIRSF000460">
    <property type="entry name" value="Pprylas_GlgP"/>
    <property type="match status" value="1"/>
</dbReference>
<dbReference type="SUPFAM" id="SSF53756">
    <property type="entry name" value="UDP-Glycosyltransferase/glycogen phosphorylase"/>
    <property type="match status" value="1"/>
</dbReference>
<dbReference type="PROSITE" id="PS00102">
    <property type="entry name" value="PHOSPHORYLASE"/>
    <property type="match status" value="1"/>
</dbReference>
<accession>Q5R5M6</accession>
<keyword id="KW-0007">Acetylation</keyword>
<keyword id="KW-0021">Allosteric enzyme</keyword>
<keyword id="KW-0119">Carbohydrate metabolism</keyword>
<keyword id="KW-0321">Glycogen metabolism</keyword>
<keyword id="KW-0328">Glycosyltransferase</keyword>
<keyword id="KW-0597">Phosphoprotein</keyword>
<keyword id="KW-0663">Pyridoxal phosphate</keyword>
<keyword id="KW-1185">Reference proteome</keyword>
<keyword id="KW-0808">Transferase</keyword>
<feature type="initiator methionine" description="Removed" evidence="2">
    <location>
        <position position="1"/>
    </location>
</feature>
<feature type="chain" id="PRO_0000188537" description="Glycogen phosphorylase, brain form">
    <location>
        <begin position="2"/>
        <end position="843"/>
    </location>
</feature>
<feature type="region of interest" description="Pyridoxal 5'-phosphate" evidence="2">
    <location>
        <begin position="677"/>
        <end position="678"/>
    </location>
</feature>
<feature type="binding site" evidence="2">
    <location>
        <position position="43"/>
    </location>
    <ligand>
        <name>AMP</name>
        <dbReference type="ChEBI" id="CHEBI:456215"/>
        <note>ligand shared between dimeric partners</note>
    </ligand>
</feature>
<feature type="binding site" description="in other chain" evidence="2">
    <location>
        <position position="197"/>
    </location>
    <ligand>
        <name>AMP</name>
        <dbReference type="ChEBI" id="CHEBI:456215"/>
        <note>ligand shared between dimeric partners</note>
    </ligand>
</feature>
<feature type="binding site" description="in other chain" evidence="2">
    <location>
        <position position="310"/>
    </location>
    <ligand>
        <name>AMP</name>
        <dbReference type="ChEBI" id="CHEBI:456215"/>
        <note>ligand shared between dimeric partners</note>
    </ligand>
</feature>
<feature type="binding site" evidence="2">
    <location>
        <position position="569"/>
    </location>
    <ligand>
        <name>pyridoxal 5'-phosphate</name>
        <dbReference type="ChEBI" id="CHEBI:597326"/>
    </ligand>
</feature>
<feature type="site" description="Participates in a stacking interaction with the adenine ring of AMP" evidence="2">
    <location>
        <position position="76"/>
    </location>
</feature>
<feature type="site" description="Involved in the association of subunits" evidence="1">
    <location>
        <position position="109"/>
    </location>
</feature>
<feature type="site" description="Involved in the association of subunits" evidence="1">
    <location>
        <position position="143"/>
    </location>
</feature>
<feature type="site" description="May be involved in allosteric control" evidence="1">
    <location>
        <position position="156"/>
    </location>
</feature>
<feature type="modified residue" description="N-acetylalanine" evidence="2">
    <location>
        <position position="2"/>
    </location>
</feature>
<feature type="modified residue" description="Phosphoserine; by PHK; in form phosphorylase A" evidence="4">
    <location>
        <position position="15"/>
    </location>
</feature>
<feature type="modified residue" description="Phosphotyrosine" evidence="5">
    <location>
        <position position="197"/>
    </location>
</feature>
<feature type="modified residue" description="Phosphotyrosine" evidence="5">
    <location>
        <position position="473"/>
    </location>
</feature>
<feature type="modified residue" description="N6-(pyridoxal phosphate)lysine" evidence="2">
    <location>
        <position position="681"/>
    </location>
</feature>
<protein>
    <recommendedName>
        <fullName>Glycogen phosphorylase, brain form</fullName>
        <ecNumber>2.4.1.1</ecNumber>
    </recommendedName>
</protein>
<gene>
    <name type="primary">PYGB</name>
</gene>
<reference key="1">
    <citation type="submission" date="2004-11" db="EMBL/GenBank/DDBJ databases">
        <authorList>
            <consortium name="The German cDNA consortium"/>
        </authorList>
    </citation>
    <scope>NUCLEOTIDE SEQUENCE [LARGE SCALE MRNA]</scope>
    <source>
        <tissue>Kidney</tissue>
    </source>
</reference>
<sequence>MAKPLTDSEKRKQISVRGLAGLGDVAEVRKSFNRHLHFTLVKDRNVATPRDYLFALAHTVRDHLVGRWIRTQQHYYERDPKRIYYLSLEFYMGRTLQNTMVNLGLQNACDEAIYQLGLDLEELEEIEEDAGLGNGGLGRLAACFLDSMATLGLAAYGYGIRYEFGIFNQKIVNGWQVEEADDWLRYGNPWEKARPEYMLPVHFYGRVEHTPDGVKWLDTQVVLAMPYDTPVPGYKNNTVNTMRLWSAKAPNDFKLQDFNVGDYIEAVLDRNLAENISRVLYPNDNFFEGKELRLKQEYFVVAATLQDIIRRFKSSKFGCRDPVRTCFETFPDKVAIQLNDTHPALSIPELMRILVDVEKVDWDKAWEITKKTCAYTNHTVLPEALERWPVSMFEKLLPRHLEIIYAINQRHLDHVAALFPGDVDRLRRMSVIEEGDCKRINMAHLCVIGSHAVNGVARIHSEIVKQSVFKDFYELEPEKFQNKTNGITPRRWLLLCNPGLADTIVEKIGEEFLTDLSQLKKLLPLVNDEVFIRDVAKVKQENKLKFSAFLEKEYKVKINPSSMFDVHVKRIHEYKRQLLNCLHVVTLYNRIKRDPAKAFVPRTVMIGGKAAPGYHMAKLIIKLVTSIGDVVNHDPVVGDRLKVIFLENYRVSLAEKVIPAADLSQQISTAGAEASGTGNMKFMLNGALTIGTMDGANVEMAEEAGAENLFIFGLQVEDVEALDRKGYNAREYYDHLPELKQAVDQISSGFFSPKEPNCFKDIVNMLMHHDRFKVFADYEAYMQCQAQVDQLYRNPKEWTKKVIRNIACSGKFSSDRTITEYAREIWGVEPSDLQIPPPNVPRD</sequence>
<proteinExistence type="evidence at transcript level"/>
<evidence type="ECO:0000250" key="1"/>
<evidence type="ECO:0000250" key="2">
    <source>
        <dbReference type="UniProtKB" id="P11216"/>
    </source>
</evidence>
<evidence type="ECO:0000250" key="3">
    <source>
        <dbReference type="UniProtKB" id="P11217"/>
    </source>
</evidence>
<evidence type="ECO:0000250" key="4">
    <source>
        <dbReference type="UniProtKB" id="P53534"/>
    </source>
</evidence>
<evidence type="ECO:0000250" key="5">
    <source>
        <dbReference type="UniProtKB" id="Q8CI94"/>
    </source>
</evidence>
<evidence type="ECO:0000305" key="6"/>
<comment type="function">
    <text evidence="2">Glycogen phosphorylase that regulates glycogen mobilization. Phosphorylase is an important allosteric enzyme in carbohydrate metabolism. Enzymes from different sources differ in their regulatory mechanisms and in their natural substrates. However, all known phosphorylases share catalytic and structural properties.</text>
</comment>
<comment type="catalytic activity">
    <reaction>
        <text>[(1-&gt;4)-alpha-D-glucosyl](n) + phosphate = [(1-&gt;4)-alpha-D-glucosyl](n-1) + alpha-D-glucose 1-phosphate</text>
        <dbReference type="Rhea" id="RHEA:41732"/>
        <dbReference type="Rhea" id="RHEA-COMP:9584"/>
        <dbReference type="Rhea" id="RHEA-COMP:9586"/>
        <dbReference type="ChEBI" id="CHEBI:15444"/>
        <dbReference type="ChEBI" id="CHEBI:43474"/>
        <dbReference type="ChEBI" id="CHEBI:58601"/>
        <dbReference type="EC" id="2.4.1.1"/>
    </reaction>
</comment>
<comment type="cofactor">
    <cofactor evidence="1">
        <name>pyridoxal 5'-phosphate</name>
        <dbReference type="ChEBI" id="CHEBI:597326"/>
    </cofactor>
</comment>
<comment type="activity regulation">
    <text evidence="2">Activity of phosphorylase is controlled both by allosteric means (through the non-covalent binding of metabolites) and by covalent modification. Thus AMP allosterically activates, whereas ATP, ADP, and glucose-6-phosphate allosterically inhibit, phosphorylase B (By similarity).</text>
</comment>
<comment type="subunit">
    <text evidence="2">Homodimer. Dimers associate into a tetramer to form the enzymatically active phosphorylase A (By similarity).</text>
</comment>
<comment type="PTM">
    <text evidence="3">Phosphorylation of Ser-15 converts phosphorylase B (unphosphorylated) to phosphorylase A.</text>
</comment>
<comment type="similarity">
    <text evidence="6">Belongs to the glycogen phosphorylase family.</text>
</comment>
<organism>
    <name type="scientific">Pongo abelii</name>
    <name type="common">Sumatran orangutan</name>
    <name type="synonym">Pongo pygmaeus abelii</name>
    <dbReference type="NCBI Taxonomy" id="9601"/>
    <lineage>
        <taxon>Eukaryota</taxon>
        <taxon>Metazoa</taxon>
        <taxon>Chordata</taxon>
        <taxon>Craniata</taxon>
        <taxon>Vertebrata</taxon>
        <taxon>Euteleostomi</taxon>
        <taxon>Mammalia</taxon>
        <taxon>Eutheria</taxon>
        <taxon>Euarchontoglires</taxon>
        <taxon>Primates</taxon>
        <taxon>Haplorrhini</taxon>
        <taxon>Catarrhini</taxon>
        <taxon>Hominidae</taxon>
        <taxon>Pongo</taxon>
    </lineage>
</organism>
<name>PYGB_PONAB</name>